<feature type="chain" id="PRO_1000135758" description="Probable D-serine dehydratase">
    <location>
        <begin position="1"/>
        <end position="445"/>
    </location>
</feature>
<feature type="modified residue" description="N6-(pyridoxal phosphate)lysine" evidence="1">
    <location>
        <position position="116"/>
    </location>
</feature>
<name>SDHD_BACMK</name>
<dbReference type="EC" id="4.3.1.18" evidence="1"/>
<dbReference type="EMBL" id="CP000903">
    <property type="protein sequence ID" value="ABY42891.1"/>
    <property type="molecule type" value="Genomic_DNA"/>
</dbReference>
<dbReference type="RefSeq" id="WP_002031095.1">
    <property type="nucleotide sequence ID" value="NC_010184.1"/>
</dbReference>
<dbReference type="SMR" id="A9VPH9"/>
<dbReference type="KEGG" id="bwe:BcerKBAB4_1650"/>
<dbReference type="eggNOG" id="COG3048">
    <property type="taxonomic scope" value="Bacteria"/>
</dbReference>
<dbReference type="HOGENOM" id="CLU_035707_0_0_9"/>
<dbReference type="Proteomes" id="UP000002154">
    <property type="component" value="Chromosome"/>
</dbReference>
<dbReference type="GO" id="GO:0008721">
    <property type="term" value="F:D-serine ammonia-lyase activity"/>
    <property type="evidence" value="ECO:0007669"/>
    <property type="project" value="UniProtKB-EC"/>
</dbReference>
<dbReference type="GO" id="GO:0016836">
    <property type="term" value="F:hydro-lyase activity"/>
    <property type="evidence" value="ECO:0007669"/>
    <property type="project" value="UniProtKB-UniRule"/>
</dbReference>
<dbReference type="GO" id="GO:0030170">
    <property type="term" value="F:pyridoxal phosphate binding"/>
    <property type="evidence" value="ECO:0007669"/>
    <property type="project" value="InterPro"/>
</dbReference>
<dbReference type="GO" id="GO:0036088">
    <property type="term" value="P:D-serine catabolic process"/>
    <property type="evidence" value="ECO:0007669"/>
    <property type="project" value="TreeGrafter"/>
</dbReference>
<dbReference type="GO" id="GO:0009097">
    <property type="term" value="P:isoleucine biosynthetic process"/>
    <property type="evidence" value="ECO:0007669"/>
    <property type="project" value="TreeGrafter"/>
</dbReference>
<dbReference type="CDD" id="cd06447">
    <property type="entry name" value="D-Ser-dehyd"/>
    <property type="match status" value="1"/>
</dbReference>
<dbReference type="FunFam" id="3.40.50.1100:FF:000018">
    <property type="entry name" value="D-serine dehydratase"/>
    <property type="match status" value="1"/>
</dbReference>
<dbReference type="Gene3D" id="3.40.50.1100">
    <property type="match status" value="2"/>
</dbReference>
<dbReference type="HAMAP" id="MF_01030">
    <property type="entry name" value="D_Ser_dehydrat"/>
    <property type="match status" value="1"/>
</dbReference>
<dbReference type="InterPro" id="IPR011780">
    <property type="entry name" value="D_Ser_am_lyase"/>
</dbReference>
<dbReference type="InterPro" id="IPR050147">
    <property type="entry name" value="Ser/Thr_Dehydratase"/>
</dbReference>
<dbReference type="InterPro" id="IPR000634">
    <property type="entry name" value="Ser/Thr_deHydtase_PyrdxlP-BS"/>
</dbReference>
<dbReference type="InterPro" id="IPR001926">
    <property type="entry name" value="TrpB-like_PALP"/>
</dbReference>
<dbReference type="InterPro" id="IPR036052">
    <property type="entry name" value="TrpB-like_PALP_sf"/>
</dbReference>
<dbReference type="NCBIfam" id="TIGR02035">
    <property type="entry name" value="D_Ser_am_lyase"/>
    <property type="match status" value="1"/>
</dbReference>
<dbReference type="NCBIfam" id="NF002823">
    <property type="entry name" value="PRK02991.1"/>
    <property type="match status" value="1"/>
</dbReference>
<dbReference type="PANTHER" id="PTHR48078:SF9">
    <property type="entry name" value="D-SERINE DEHYDRATASE"/>
    <property type="match status" value="1"/>
</dbReference>
<dbReference type="PANTHER" id="PTHR48078">
    <property type="entry name" value="THREONINE DEHYDRATASE, MITOCHONDRIAL-RELATED"/>
    <property type="match status" value="1"/>
</dbReference>
<dbReference type="Pfam" id="PF00291">
    <property type="entry name" value="PALP"/>
    <property type="match status" value="1"/>
</dbReference>
<dbReference type="SUPFAM" id="SSF53686">
    <property type="entry name" value="Tryptophan synthase beta subunit-like PLP-dependent enzymes"/>
    <property type="match status" value="1"/>
</dbReference>
<dbReference type="PROSITE" id="PS00165">
    <property type="entry name" value="DEHYDRATASE_SER_THR"/>
    <property type="match status" value="1"/>
</dbReference>
<protein>
    <recommendedName>
        <fullName evidence="1">Probable D-serine dehydratase</fullName>
        <ecNumber evidence="1">4.3.1.18</ecNumber>
    </recommendedName>
    <alternativeName>
        <fullName evidence="1">D-serine deaminase</fullName>
        <shortName evidence="1">DSD</shortName>
    </alternativeName>
</protein>
<reference key="1">
    <citation type="journal article" date="2008" name="Chem. Biol. Interact.">
        <title>Extending the Bacillus cereus group genomics to putative food-borne pathogens of different toxicity.</title>
        <authorList>
            <person name="Lapidus A."/>
            <person name="Goltsman E."/>
            <person name="Auger S."/>
            <person name="Galleron N."/>
            <person name="Segurens B."/>
            <person name="Dossat C."/>
            <person name="Land M.L."/>
            <person name="Broussolle V."/>
            <person name="Brillard J."/>
            <person name="Guinebretiere M.-H."/>
            <person name="Sanchis V."/>
            <person name="Nguen-the C."/>
            <person name="Lereclus D."/>
            <person name="Richardson P."/>
            <person name="Wincker P."/>
            <person name="Weissenbach J."/>
            <person name="Ehrlich S.D."/>
            <person name="Sorokin A."/>
        </authorList>
    </citation>
    <scope>NUCLEOTIDE SEQUENCE [LARGE SCALE GENOMIC DNA]</scope>
    <source>
        <strain>KBAB4</strain>
    </source>
</reference>
<accession>A9VPH9</accession>
<evidence type="ECO:0000255" key="1">
    <source>
        <dbReference type="HAMAP-Rule" id="MF_01030"/>
    </source>
</evidence>
<gene>
    <name evidence="1" type="primary">dsdA</name>
    <name type="ordered locus">BcerKBAB4_1650</name>
</gene>
<organism>
    <name type="scientific">Bacillus mycoides (strain KBAB4)</name>
    <name type="common">Bacillus weihenstephanensis</name>
    <dbReference type="NCBI Taxonomy" id="315730"/>
    <lineage>
        <taxon>Bacteria</taxon>
        <taxon>Bacillati</taxon>
        <taxon>Bacillota</taxon>
        <taxon>Bacilli</taxon>
        <taxon>Bacillales</taxon>
        <taxon>Bacillaceae</taxon>
        <taxon>Bacillus</taxon>
        <taxon>Bacillus cereus group</taxon>
    </lineage>
</organism>
<keyword id="KW-0456">Lyase</keyword>
<keyword id="KW-0663">Pyridoxal phosphate</keyword>
<sequence length="445" mass="49289">MKEIEALKEQYPLVNNLIATEEVFWVNPNMEKYETAIKNSPLNEEHVKDAEERLKRFAPYIAKVFPETKETGGIIESPLVKISSMKQSLEKNYEQPILGELLLKCDSHLPISGSIKARGGIYEVLKHAEQLALQHGMLTEKDDYSILDSDRFRGFFAKYSIAVGSTGNLGLSIGIMSAKLGFNVTVHMSADAKQWKKDLLRSKGVNVIEYEADYSKAVEEGRLQADADPSCYFVDDENSHDLFLGYAVAASRLQKQLEELEIVVDEEHPLFVYLPCGVGGGPGGVAFGLKLLYKDNVHCFFAEPTHSPCMLLGLMTGLHDKIAVQDIGIDNVTDADGLAVGRPSGFVGKTMEPFLSGNYTVSDEELYRLLKELADTENIYLEPSALAGMIGPLNVCKAENEYLQKQQLTEKVKKGTHIVWGTGGSMVPEDVMNGYYKKGLELTCK</sequence>
<proteinExistence type="inferred from homology"/>
<comment type="catalytic activity">
    <reaction evidence="1">
        <text>D-serine = pyruvate + NH4(+)</text>
        <dbReference type="Rhea" id="RHEA:13977"/>
        <dbReference type="ChEBI" id="CHEBI:15361"/>
        <dbReference type="ChEBI" id="CHEBI:28938"/>
        <dbReference type="ChEBI" id="CHEBI:35247"/>
        <dbReference type="EC" id="4.3.1.18"/>
    </reaction>
</comment>
<comment type="cofactor">
    <cofactor evidence="1">
        <name>pyridoxal 5'-phosphate</name>
        <dbReference type="ChEBI" id="CHEBI:597326"/>
    </cofactor>
</comment>
<comment type="similarity">
    <text evidence="1">Belongs to the serine/threonine dehydratase family. DsdA subfamily.</text>
</comment>